<feature type="chain" id="PRO_1000044813" description="UPF0260 protein YcgN">
    <location>
        <begin position="1"/>
        <end position="153"/>
    </location>
</feature>
<dbReference type="EMBL" id="CP000266">
    <property type="protein sequence ID" value="ABF03396.1"/>
    <property type="molecule type" value="Genomic_DNA"/>
</dbReference>
<dbReference type="KEGG" id="sfv:SFV_1188"/>
<dbReference type="HOGENOM" id="CLU_109769_2_0_6"/>
<dbReference type="Proteomes" id="UP000000659">
    <property type="component" value="Chromosome"/>
</dbReference>
<dbReference type="HAMAP" id="MF_00676">
    <property type="entry name" value="UPF0260"/>
    <property type="match status" value="1"/>
</dbReference>
<dbReference type="InterPro" id="IPR005358">
    <property type="entry name" value="Puta_zinc/iron-chelating_dom"/>
</dbReference>
<dbReference type="InterPro" id="IPR008228">
    <property type="entry name" value="UCP006173"/>
</dbReference>
<dbReference type="NCBIfam" id="NF003498">
    <property type="entry name" value="PRK05170.1-1"/>
    <property type="match status" value="1"/>
</dbReference>
<dbReference type="NCBIfam" id="NF003501">
    <property type="entry name" value="PRK05170.1-5"/>
    <property type="match status" value="1"/>
</dbReference>
<dbReference type="NCBIfam" id="NF003503">
    <property type="entry name" value="PRK05170.2-1"/>
    <property type="match status" value="1"/>
</dbReference>
<dbReference type="NCBIfam" id="NF003507">
    <property type="entry name" value="PRK05170.2-5"/>
    <property type="match status" value="1"/>
</dbReference>
<dbReference type="PANTHER" id="PTHR37421">
    <property type="entry name" value="UPF0260 PROTEIN YCGN"/>
    <property type="match status" value="1"/>
</dbReference>
<dbReference type="PANTHER" id="PTHR37421:SF1">
    <property type="entry name" value="UPF0260 PROTEIN YCGN"/>
    <property type="match status" value="1"/>
</dbReference>
<dbReference type="Pfam" id="PF03692">
    <property type="entry name" value="CxxCxxCC"/>
    <property type="match status" value="1"/>
</dbReference>
<dbReference type="PIRSF" id="PIRSF006173">
    <property type="entry name" value="UCP006173"/>
    <property type="match status" value="1"/>
</dbReference>
<organism>
    <name type="scientific">Shigella flexneri serotype 5b (strain 8401)</name>
    <dbReference type="NCBI Taxonomy" id="373384"/>
    <lineage>
        <taxon>Bacteria</taxon>
        <taxon>Pseudomonadati</taxon>
        <taxon>Pseudomonadota</taxon>
        <taxon>Gammaproteobacteria</taxon>
        <taxon>Enterobacterales</taxon>
        <taxon>Enterobacteriaceae</taxon>
        <taxon>Shigella</taxon>
    </lineage>
</organism>
<proteinExistence type="inferred from homology"/>
<evidence type="ECO:0000255" key="1">
    <source>
        <dbReference type="HAMAP-Rule" id="MF_00676"/>
    </source>
</evidence>
<sequence length="153" mass="17910">MAEHLMSDVPFWQSKTLDEMSDAEWESLCDGCGQCCLHKLMDEDTDEIYFTNVACRQLNIKTCQCRNYERRFEFEPDCIKLTRENLPTFEWLPMTCAYRLLAEGKDLPAWHPLLTGSKAAMHGERISVRHIAVKESEVIDWQDHILNKPDWAQ</sequence>
<accession>Q0T5L9</accession>
<comment type="similarity">
    <text evidence="1">Belongs to the UPF0260 family.</text>
</comment>
<name>YCGN_SHIF8</name>
<reference key="1">
    <citation type="journal article" date="2006" name="BMC Genomics">
        <title>Complete genome sequence of Shigella flexneri 5b and comparison with Shigella flexneri 2a.</title>
        <authorList>
            <person name="Nie H."/>
            <person name="Yang F."/>
            <person name="Zhang X."/>
            <person name="Yang J."/>
            <person name="Chen L."/>
            <person name="Wang J."/>
            <person name="Xiong Z."/>
            <person name="Peng J."/>
            <person name="Sun L."/>
            <person name="Dong J."/>
            <person name="Xue Y."/>
            <person name="Xu X."/>
            <person name="Chen S."/>
            <person name="Yao Z."/>
            <person name="Shen Y."/>
            <person name="Jin Q."/>
        </authorList>
    </citation>
    <scope>NUCLEOTIDE SEQUENCE [LARGE SCALE GENOMIC DNA]</scope>
    <source>
        <strain>8401</strain>
    </source>
</reference>
<protein>
    <recommendedName>
        <fullName evidence="1">UPF0260 protein YcgN</fullName>
    </recommendedName>
</protein>
<gene>
    <name evidence="1" type="primary">ycgN</name>
    <name type="ordered locus">SFV_1188</name>
</gene>